<comment type="function">
    <text evidence="1">Produces ATP from ADP in the presence of a proton gradient across the membrane. The gamma chain is believed to be important in regulating ATPase activity and the flow of protons through the CF(0) complex.</text>
</comment>
<comment type="subunit">
    <text evidence="1">F-type ATPases have 2 components, CF(1) - the catalytic core - and CF(0) - the membrane proton channel. CF(1) has five subunits: alpha(3), beta(3), gamma(1), delta(1), epsilon(1). CF(0) has three main subunits: a, b and c.</text>
</comment>
<comment type="subcellular location">
    <subcellularLocation>
        <location evidence="1">Cell membrane</location>
        <topology evidence="1">Peripheral membrane protein</topology>
    </subcellularLocation>
</comment>
<comment type="similarity">
    <text evidence="1">Belongs to the ATPase gamma chain family.</text>
</comment>
<name>ATPG_CORJK</name>
<organism>
    <name type="scientific">Corynebacterium jeikeium (strain K411)</name>
    <dbReference type="NCBI Taxonomy" id="306537"/>
    <lineage>
        <taxon>Bacteria</taxon>
        <taxon>Bacillati</taxon>
        <taxon>Actinomycetota</taxon>
        <taxon>Actinomycetes</taxon>
        <taxon>Mycobacteriales</taxon>
        <taxon>Corynebacteriaceae</taxon>
        <taxon>Corynebacterium</taxon>
    </lineage>
</organism>
<protein>
    <recommendedName>
        <fullName evidence="1">ATP synthase gamma chain</fullName>
    </recommendedName>
    <alternativeName>
        <fullName evidence="1">ATP synthase F1 sector gamma subunit</fullName>
    </alternativeName>
    <alternativeName>
        <fullName evidence="1">F-ATPase gamma subunit</fullName>
    </alternativeName>
</protein>
<reference key="1">
    <citation type="journal article" date="2005" name="J. Bacteriol.">
        <title>Complete genome sequence and analysis of the multiresistant nosocomial pathogen Corynebacterium jeikeium K411, a lipid-requiring bacterium of the human skin flora.</title>
        <authorList>
            <person name="Tauch A."/>
            <person name="Kaiser O."/>
            <person name="Hain T."/>
            <person name="Goesmann A."/>
            <person name="Weisshaar B."/>
            <person name="Albersmeier A."/>
            <person name="Bekel T."/>
            <person name="Bischoff N."/>
            <person name="Brune I."/>
            <person name="Chakraborty T."/>
            <person name="Kalinowski J."/>
            <person name="Meyer F."/>
            <person name="Rupp O."/>
            <person name="Schneiker S."/>
            <person name="Viehoever P."/>
            <person name="Puehler A."/>
        </authorList>
    </citation>
    <scope>NUCLEOTIDE SEQUENCE [LARGE SCALE GENOMIC DNA]</scope>
    <source>
        <strain>K411</strain>
    </source>
</reference>
<dbReference type="EMBL" id="CR931997">
    <property type="protein sequence ID" value="CAI37508.1"/>
    <property type="molecule type" value="Genomic_DNA"/>
</dbReference>
<dbReference type="RefSeq" id="WP_005292974.1">
    <property type="nucleotide sequence ID" value="NC_007164.1"/>
</dbReference>
<dbReference type="SMR" id="Q4JUJ9"/>
<dbReference type="STRING" id="306537.jk1336"/>
<dbReference type="GeneID" id="92738917"/>
<dbReference type="KEGG" id="cjk:jk1336"/>
<dbReference type="eggNOG" id="COG0224">
    <property type="taxonomic scope" value="Bacteria"/>
</dbReference>
<dbReference type="HOGENOM" id="CLU_050669_0_0_11"/>
<dbReference type="OrthoDB" id="9812769at2"/>
<dbReference type="Proteomes" id="UP000000545">
    <property type="component" value="Chromosome"/>
</dbReference>
<dbReference type="GO" id="GO:0005886">
    <property type="term" value="C:plasma membrane"/>
    <property type="evidence" value="ECO:0007669"/>
    <property type="project" value="UniProtKB-SubCell"/>
</dbReference>
<dbReference type="GO" id="GO:0045259">
    <property type="term" value="C:proton-transporting ATP synthase complex"/>
    <property type="evidence" value="ECO:0007669"/>
    <property type="project" value="UniProtKB-KW"/>
</dbReference>
<dbReference type="GO" id="GO:0005524">
    <property type="term" value="F:ATP binding"/>
    <property type="evidence" value="ECO:0007669"/>
    <property type="project" value="UniProtKB-UniRule"/>
</dbReference>
<dbReference type="GO" id="GO:0046933">
    <property type="term" value="F:proton-transporting ATP synthase activity, rotational mechanism"/>
    <property type="evidence" value="ECO:0007669"/>
    <property type="project" value="UniProtKB-UniRule"/>
</dbReference>
<dbReference type="GO" id="GO:0042777">
    <property type="term" value="P:proton motive force-driven plasma membrane ATP synthesis"/>
    <property type="evidence" value="ECO:0007669"/>
    <property type="project" value="UniProtKB-UniRule"/>
</dbReference>
<dbReference type="CDD" id="cd12151">
    <property type="entry name" value="F1-ATPase_gamma"/>
    <property type="match status" value="1"/>
</dbReference>
<dbReference type="Gene3D" id="3.40.1380.10">
    <property type="match status" value="1"/>
</dbReference>
<dbReference type="Gene3D" id="1.10.287.80">
    <property type="entry name" value="ATP synthase, gamma subunit, helix hairpin domain"/>
    <property type="match status" value="2"/>
</dbReference>
<dbReference type="HAMAP" id="MF_00815">
    <property type="entry name" value="ATP_synth_gamma_bact"/>
    <property type="match status" value="1"/>
</dbReference>
<dbReference type="InterPro" id="IPR035968">
    <property type="entry name" value="ATP_synth_F1_ATPase_gsu"/>
</dbReference>
<dbReference type="InterPro" id="IPR000131">
    <property type="entry name" value="ATP_synth_F1_gsu"/>
</dbReference>
<dbReference type="InterPro" id="IPR023632">
    <property type="entry name" value="ATP_synth_F1_gsu_CS"/>
</dbReference>
<dbReference type="NCBIfam" id="TIGR01146">
    <property type="entry name" value="ATPsyn_F1gamma"/>
    <property type="match status" value="1"/>
</dbReference>
<dbReference type="NCBIfam" id="NF004145">
    <property type="entry name" value="PRK05621.1-2"/>
    <property type="match status" value="1"/>
</dbReference>
<dbReference type="PANTHER" id="PTHR11693">
    <property type="entry name" value="ATP SYNTHASE GAMMA CHAIN"/>
    <property type="match status" value="1"/>
</dbReference>
<dbReference type="PANTHER" id="PTHR11693:SF22">
    <property type="entry name" value="ATP SYNTHASE SUBUNIT GAMMA, MITOCHONDRIAL"/>
    <property type="match status" value="1"/>
</dbReference>
<dbReference type="Pfam" id="PF00231">
    <property type="entry name" value="ATP-synt"/>
    <property type="match status" value="1"/>
</dbReference>
<dbReference type="PRINTS" id="PR00126">
    <property type="entry name" value="ATPASEGAMMA"/>
</dbReference>
<dbReference type="SUPFAM" id="SSF52943">
    <property type="entry name" value="ATP synthase (F1-ATPase), gamma subunit"/>
    <property type="match status" value="1"/>
</dbReference>
<dbReference type="PROSITE" id="PS00153">
    <property type="entry name" value="ATPASE_GAMMA"/>
    <property type="match status" value="1"/>
</dbReference>
<proteinExistence type="inferred from homology"/>
<feature type="chain" id="PRO_0000073273" description="ATP synthase gamma chain">
    <location>
        <begin position="1"/>
        <end position="326"/>
    </location>
</feature>
<evidence type="ECO:0000255" key="1">
    <source>
        <dbReference type="HAMAP-Rule" id="MF_00815"/>
    </source>
</evidence>
<sequence>MASLRELRTRIKSVNSTKKITKAQELIATSRITKAQARVDDAEPYADEITRVVQRLAAASTLDHKILQEPTDASRAAILVVSSDRGMCGGYNNNVFKKTAELRKRLENEGKDVVLYVSGNKGISYYNFRGEDIAGAWSGYSQDPDYAATHDVRRHLIDGFVAGSEGTAKWREGLKAEEGQAVQGFDEVHIVYTRFESMLSQKPEAHRLLPIETVVEEEKFELGEDLVSDKVDHIAADYDFEPDPDTLLKALLPQYVSRGIFAAMLESAASESAARRTAMSAATDNATDLVKQLSRVANQARQAQITQEITEIVGGASALADSGESD</sequence>
<keyword id="KW-0066">ATP synthesis</keyword>
<keyword id="KW-1003">Cell membrane</keyword>
<keyword id="KW-0139">CF(1)</keyword>
<keyword id="KW-0375">Hydrogen ion transport</keyword>
<keyword id="KW-0406">Ion transport</keyword>
<keyword id="KW-0472">Membrane</keyword>
<keyword id="KW-1185">Reference proteome</keyword>
<keyword id="KW-0813">Transport</keyword>
<accession>Q4JUJ9</accession>
<gene>
    <name evidence="1" type="primary">atpG</name>
    <name type="ordered locus">jk1336</name>
</gene>